<comment type="function">
    <text evidence="4 5 6 7 8 9">Cytochrome P450 monooxygenase; part of the gene cluster that mediates the biosynthesis of PR-toxin, a bicyclic sesquiterpene belonging to the eremophilane class and acting as a mycotoxin (PubMed:24239699, PubMed:27921136). The first step of the pathway is catalyzed by the aristolochene synthase which performs the cyclization of trans,trans-farnesyl diphosphate (FPP) to the bicyclic sesquiterpene aristolochene (PubMed:15186158, PubMed:24239699, PubMed:8440737). Following the formation of aristolochene, the non-oxygenated aristolochene is converted to the trioxygenated intermediate eremofortin B, via 7-epi-neopetasone (PubMed:24239699, PubMed:26274339). This conversion appears to involve three enzymes, a hydroxysterol oxidase-like enzyme, the quinone-oxidase prx3 that forms the quinone-type-structure in the bicyclic nucleus of aristolochene with the C8-oxo group and the C-3 hydroxyl group, and the P450 monooxygenase ORF6 that introduces the epoxide at the double bond between carbons 1 and 2 (PubMed:24239699, PubMed:27921136). No monoxy or dioxy-intermediates have been reported to be released to the broth, so these three early oxidative reactions may be coupled together (PubMed:24239699). Eremofortin B is further oxidized by another P450 monooxygenase, that introduces a second epoxide between carbons 7 and 11 prior to acetylation to eremofortin A by the acetyltransferase ORF8 (PubMed:16345540, PubMed:24239699, PubMed:27921136). The second epoxidation may be performed by a second P450 monooxygenase (PubMed:24239699). After the acetylation step, eremofortin A is converted to eremofortin C and then to PR-toxin (PubMed:24239699). First the conversion of eremofortin A to eremofortin C proceeds by oxidation of the side chain of the molecule at C-12 and is catalyzed by the short-chain oxidoreductase prx1 (PubMed:16345540, PubMed:24239699). The cytochrome P450 monooxygenase ORF6 is probably also involved in this step (PubMed:27921136). The primary alcohol formed at C-12 is finally oxidized by the short-chain alcohol dehydrogenase prx4 that forms PR-toxin (PubMed:16345540, PubMed:24239699).</text>
</comment>
<comment type="cofactor">
    <cofactor evidence="1">
        <name>heme</name>
        <dbReference type="ChEBI" id="CHEBI:30413"/>
    </cofactor>
</comment>
<comment type="pathway">
    <text evidence="8 12">Sesquiterpene biosynthesis.</text>
</comment>
<comment type="subcellular location">
    <subcellularLocation>
        <location evidence="2">Membrane</location>
        <topology evidence="2">Single-pass membrane protein</topology>
    </subcellularLocation>
</comment>
<comment type="disruption phenotype">
    <text evidence="8">Impairs the production of PR-toxin as well as of the intermediate eremofortin A, but accumulates eremofortin B.</text>
</comment>
<comment type="similarity">
    <text evidence="11">Belongs to the cytochrome P450 family.</text>
</comment>
<feature type="chain" id="PRO_0000451222" description="Cytochrome P450 monooxygenase ORF5">
    <location>
        <begin position="1"/>
        <end position="540"/>
    </location>
</feature>
<feature type="transmembrane region" description="Helical" evidence="2">
    <location>
        <begin position="48"/>
        <end position="68"/>
    </location>
</feature>
<feature type="binding site" description="axial binding residue" evidence="1">
    <location>
        <position position="483"/>
    </location>
    <ligand>
        <name>heme</name>
        <dbReference type="ChEBI" id="CHEBI:30413"/>
    </ligand>
    <ligandPart>
        <name>Fe</name>
        <dbReference type="ChEBI" id="CHEBI:18248"/>
    </ligandPart>
</feature>
<feature type="glycosylation site" description="N-linked (GlcNAc...) asparagine" evidence="3">
    <location>
        <position position="376"/>
    </location>
</feature>
<feature type="glycosylation site" description="N-linked (GlcNAc...) asparagine" evidence="3">
    <location>
        <position position="460"/>
    </location>
</feature>
<evidence type="ECO:0000250" key="1">
    <source>
        <dbReference type="UniProtKB" id="P04798"/>
    </source>
</evidence>
<evidence type="ECO:0000255" key="2"/>
<evidence type="ECO:0000255" key="3">
    <source>
        <dbReference type="PROSITE-ProRule" id="PRU00498"/>
    </source>
</evidence>
<evidence type="ECO:0000269" key="4">
    <source>
    </source>
</evidence>
<evidence type="ECO:0000269" key="5">
    <source>
    </source>
</evidence>
<evidence type="ECO:0000269" key="6">
    <source>
    </source>
</evidence>
<evidence type="ECO:0000269" key="7">
    <source>
    </source>
</evidence>
<evidence type="ECO:0000269" key="8">
    <source>
    </source>
</evidence>
<evidence type="ECO:0000269" key="9">
    <source>
    </source>
</evidence>
<evidence type="ECO:0000303" key="10">
    <source>
    </source>
</evidence>
<evidence type="ECO:0000305" key="11"/>
<evidence type="ECO:0000305" key="12">
    <source>
    </source>
</evidence>
<evidence type="ECO:0000305" key="13">
    <source>
    </source>
</evidence>
<organism>
    <name type="scientific">Penicillium roqueforti (strain FM164)</name>
    <dbReference type="NCBI Taxonomy" id="1365484"/>
    <lineage>
        <taxon>Eukaryota</taxon>
        <taxon>Fungi</taxon>
        <taxon>Dikarya</taxon>
        <taxon>Ascomycota</taxon>
        <taxon>Pezizomycotina</taxon>
        <taxon>Eurotiomycetes</taxon>
        <taxon>Eurotiomycetidae</taxon>
        <taxon>Eurotiales</taxon>
        <taxon>Aspergillaceae</taxon>
        <taxon>Penicillium</taxon>
    </lineage>
</organism>
<protein>
    <recommendedName>
        <fullName evidence="10">Cytochrome P450 monooxygenase ORF5</fullName>
        <ecNumber evidence="13">1.-.-.-</ecNumber>
    </recommendedName>
    <alternativeName>
        <fullName evidence="10">PR-toxin biosynthesis cluster protein 5</fullName>
    </alternativeName>
</protein>
<keyword id="KW-0325">Glycoprotein</keyword>
<keyword id="KW-0349">Heme</keyword>
<keyword id="KW-0408">Iron</keyword>
<keyword id="KW-0472">Membrane</keyword>
<keyword id="KW-0479">Metal-binding</keyword>
<keyword id="KW-0503">Monooxygenase</keyword>
<keyword id="KW-0560">Oxidoreductase</keyword>
<keyword id="KW-1185">Reference proteome</keyword>
<keyword id="KW-0812">Transmembrane</keyword>
<keyword id="KW-1133">Transmembrane helix</keyword>
<dbReference type="EC" id="1.-.-.-" evidence="13"/>
<dbReference type="EMBL" id="HG792016">
    <property type="protein sequence ID" value="CDM31318.1"/>
    <property type="molecule type" value="Genomic_DNA"/>
</dbReference>
<dbReference type="SMR" id="W6Q3Z9"/>
<dbReference type="STRING" id="1365484.W6Q3Z9"/>
<dbReference type="GlyCosmos" id="W6Q3Z9">
    <property type="glycosylation" value="2 sites, No reported glycans"/>
</dbReference>
<dbReference type="OMA" id="MHIAFPL"/>
<dbReference type="OrthoDB" id="1844152at2759"/>
<dbReference type="Proteomes" id="UP000030686">
    <property type="component" value="Unassembled WGS sequence"/>
</dbReference>
<dbReference type="GO" id="GO:0016020">
    <property type="term" value="C:membrane"/>
    <property type="evidence" value="ECO:0007669"/>
    <property type="project" value="UniProtKB-SubCell"/>
</dbReference>
<dbReference type="GO" id="GO:0020037">
    <property type="term" value="F:heme binding"/>
    <property type="evidence" value="ECO:0007669"/>
    <property type="project" value="InterPro"/>
</dbReference>
<dbReference type="GO" id="GO:0005506">
    <property type="term" value="F:iron ion binding"/>
    <property type="evidence" value="ECO:0007669"/>
    <property type="project" value="InterPro"/>
</dbReference>
<dbReference type="GO" id="GO:0004497">
    <property type="term" value="F:monooxygenase activity"/>
    <property type="evidence" value="ECO:0007669"/>
    <property type="project" value="UniProtKB-KW"/>
</dbReference>
<dbReference type="GO" id="GO:0016705">
    <property type="term" value="F:oxidoreductase activity, acting on paired donors, with incorporation or reduction of molecular oxygen"/>
    <property type="evidence" value="ECO:0007669"/>
    <property type="project" value="InterPro"/>
</dbReference>
<dbReference type="GO" id="GO:0043386">
    <property type="term" value="P:mycotoxin biosynthetic process"/>
    <property type="evidence" value="ECO:0007669"/>
    <property type="project" value="UniProtKB-ARBA"/>
</dbReference>
<dbReference type="CDD" id="cd11041">
    <property type="entry name" value="CYP503A1-like"/>
    <property type="match status" value="1"/>
</dbReference>
<dbReference type="Gene3D" id="1.10.630.10">
    <property type="entry name" value="Cytochrome P450"/>
    <property type="match status" value="1"/>
</dbReference>
<dbReference type="InterPro" id="IPR001128">
    <property type="entry name" value="Cyt_P450"/>
</dbReference>
<dbReference type="InterPro" id="IPR017972">
    <property type="entry name" value="Cyt_P450_CS"/>
</dbReference>
<dbReference type="InterPro" id="IPR002403">
    <property type="entry name" value="Cyt_P450_E_grp-IV"/>
</dbReference>
<dbReference type="InterPro" id="IPR036396">
    <property type="entry name" value="Cyt_P450_sf"/>
</dbReference>
<dbReference type="PANTHER" id="PTHR46206">
    <property type="entry name" value="CYTOCHROME P450"/>
    <property type="match status" value="1"/>
</dbReference>
<dbReference type="PANTHER" id="PTHR46206:SF6">
    <property type="entry name" value="CYTOCHROME P450 MONOOXYGENASE AN1598-RELATED"/>
    <property type="match status" value="1"/>
</dbReference>
<dbReference type="Pfam" id="PF00067">
    <property type="entry name" value="p450"/>
    <property type="match status" value="1"/>
</dbReference>
<dbReference type="PRINTS" id="PR00465">
    <property type="entry name" value="EP450IV"/>
</dbReference>
<dbReference type="SUPFAM" id="SSF48264">
    <property type="entry name" value="Cytochrome P450"/>
    <property type="match status" value="1"/>
</dbReference>
<dbReference type="PROSITE" id="PS00086">
    <property type="entry name" value="CYTOCHROME_P450"/>
    <property type="match status" value="1"/>
</dbReference>
<sequence>MAVIFSSSALDSHTHVDKHLVRRPIRDLENNVDMLDHLSRVLTLSYQYHALGTAIALFACACAYALVAPRQPPKFPAPQLYDETGPIDLIALDKTIREGFQNYKGKYFTLKEAHGETVILPTKFMEELKALPDNMLNLDDEIDERFLSEHSLFTTTSVGGRISTVVNSVKNELTKTLGHLMGDIHEEVVYSFQELIPPCDDWTEIDIQSKLVRIVALVSGRIFVGLPMSRNQEYLDCIIEFTLNVFFAVPEIRAYPRLLRWTSRYLNTKVRAVHKSLATMRRLMAPIIAGTKQQLEMGTGPHNMCAWNIKNSNQKERDSLNIQAQMQLATSMAAIHTTSMTVTNAIFDLAARPEYLQPLRDELQDLRATEPLPYLNKSSMPKLRKLDSFLKESHRLSPISLLNMRRKIVQPITLHDGTVLQPGMHIAFPLHQVSNDEDLWENPSQFDGFRFQKLRDLPGNESKYQFTATGTNNLDFGYGVHACPGRFFAANEIKMILVHLIDNFDFKFKGDIGRPDSLWTPGGYHPDPSVRVLLKRRLKA</sequence>
<reference key="1">
    <citation type="journal article" date="2014" name="Nat. Commun.">
        <title>Multiple recent horizontal transfers of a large genomic region in cheese making fungi.</title>
        <authorList>
            <person name="Cheeseman K."/>
            <person name="Ropars J."/>
            <person name="Renault P."/>
            <person name="Dupont J."/>
            <person name="Gouzy J."/>
            <person name="Branca A."/>
            <person name="Abraham A.-L."/>
            <person name="Ceppi M."/>
            <person name="Conseiller E."/>
            <person name="Debuchy R."/>
            <person name="Malagnac F."/>
            <person name="Goarin A."/>
            <person name="Silar P."/>
            <person name="Lacoste S."/>
            <person name="Sallet E."/>
            <person name="Bensimon A."/>
            <person name="Giraud T."/>
            <person name="Brygoo Y."/>
        </authorList>
    </citation>
    <scope>NUCLEOTIDE SEQUENCE [LARGE SCALE GENOMIC DNA]</scope>
    <source>
        <strain>FM164</strain>
    </source>
</reference>
<reference key="2">
    <citation type="journal article" date="1980" name="Appl. Environ. Microbiol.">
        <title>Production of eremofortins A, B, and C relative to formation of PR toxin by Penicillium roqueforti.</title>
        <authorList>
            <person name="Moreau S."/>
            <person name="Lablache-Combier A."/>
            <person name="Biguet J."/>
        </authorList>
    </citation>
    <scope>FUNCTION</scope>
</reference>
<reference key="3">
    <citation type="journal article" date="1993" name="J. Biol. Chem.">
        <title>Aristolochene synthase. Isolation, characterization, and bacterial expression of a sesquiterpenoid biosynthetic gene (Ari1) from Penicillium roqueforti.</title>
        <authorList>
            <person name="Proctor R.H."/>
            <person name="Hohn T.M."/>
        </authorList>
    </citation>
    <scope>FUNCTION</scope>
</reference>
<reference key="4">
    <citation type="journal article" date="2004" name="J. Am. Chem. Soc.">
        <title>Aristolochene synthase: mechanistic analysis of active site residues by site-directed mutagenesis.</title>
        <authorList>
            <person name="Felicetti B."/>
            <person name="Cane D.E."/>
        </authorList>
    </citation>
    <scope>FUNCTION</scope>
</reference>
<reference key="5">
    <citation type="journal article" date="2014" name="Fungal Genet. Biol.">
        <title>Molecular characterization of the PR-toxin gene cluster in Penicillium roqueforti and Penicillium chrysogenum: cross talk of secondary metabolite pathways.</title>
        <authorList>
            <person name="Hidalgo P.I."/>
            <person name="Ullan R.V."/>
            <person name="Albillos S.M."/>
            <person name="Montero O."/>
            <person name="Fernandez-Bodega M.A."/>
            <person name="Garcia-Estrada C."/>
            <person name="Fernandez-Aguado M."/>
            <person name="Martin J.F."/>
        </authorList>
    </citation>
    <scope>FUNCTION</scope>
</reference>
<reference key="6">
    <citation type="journal article" date="2015" name="Angew. Chem. Int. Ed.">
        <title>Identification of intermediates in the biosynthesis of PR toxin by Penicillium roqueforti.</title>
        <authorList>
            <person name="Riclea R."/>
            <person name="Dickschat J.S."/>
        </authorList>
    </citation>
    <scope>FUNCTION</scope>
</reference>
<reference key="7">
    <citation type="journal article" date="2017" name="Appl. Microbiol. Biotechnol.">
        <title>Penicillium roqueforti PR toxin gene cluster characterization.</title>
        <authorList>
            <person name="Hidalgo P.I."/>
            <person name="Poirier E."/>
            <person name="Ullan R.V."/>
            <person name="Piqueras J."/>
            <person name="Meslet-Cladiere L."/>
            <person name="Coton E."/>
            <person name="Coton M."/>
        </authorList>
    </citation>
    <scope>FUNCTION</scope>
    <scope>DISRUPTION PHENOTYPE</scope>
    <scope>PATHWAY</scope>
</reference>
<name>PRX8_PENRF</name>
<gene>
    <name evidence="10" type="primary">ORF5</name>
    <name type="ORF">PROQFM164_S02g001468</name>
</gene>
<accession>W6Q3Z9</accession>
<proteinExistence type="inferred from homology"/>